<reference key="1">
    <citation type="journal article" date="1994" name="Proc. Natl. Acad. Sci. U.S.A.">
        <title>Cloning and analysis of the Saccharomyces cerevisiae MNN9 and MNN1 genes required for complex glycosylation of secreted proteins.</title>
        <authorList>
            <person name="Yip C.L."/>
            <person name="Welch S.K."/>
            <person name="Klebl F."/>
            <person name="Gilbert T."/>
            <person name="Seidel P."/>
            <person name="Grant F.J."/>
            <person name="O'Hara P.J."/>
            <person name="Mackay V.L."/>
        </authorList>
    </citation>
    <scope>NUCLEOTIDE SEQUENCE [GENOMIC DNA]</scope>
    <source>
        <strain>ATCC 26109 / X2180</strain>
    </source>
</reference>
<reference key="2">
    <citation type="journal article" date="1997" name="Nature">
        <title>The nucleotide sequence of Saccharomyces cerevisiae chromosome XVI.</title>
        <authorList>
            <person name="Bussey H."/>
            <person name="Storms R.K."/>
            <person name="Ahmed A."/>
            <person name="Albermann K."/>
            <person name="Allen E."/>
            <person name="Ansorge W."/>
            <person name="Araujo R."/>
            <person name="Aparicio A."/>
            <person name="Barrell B.G."/>
            <person name="Badcock K."/>
            <person name="Benes V."/>
            <person name="Botstein D."/>
            <person name="Bowman S."/>
            <person name="Brueckner M."/>
            <person name="Carpenter J."/>
            <person name="Cherry J.M."/>
            <person name="Chung E."/>
            <person name="Churcher C.M."/>
            <person name="Coster F."/>
            <person name="Davis K."/>
            <person name="Davis R.W."/>
            <person name="Dietrich F.S."/>
            <person name="Delius H."/>
            <person name="DiPaolo T."/>
            <person name="Dubois E."/>
            <person name="Duesterhoeft A."/>
            <person name="Duncan M."/>
            <person name="Floeth M."/>
            <person name="Fortin N."/>
            <person name="Friesen J.D."/>
            <person name="Fritz C."/>
            <person name="Goffeau A."/>
            <person name="Hall J."/>
            <person name="Hebling U."/>
            <person name="Heumann K."/>
            <person name="Hilbert H."/>
            <person name="Hillier L.W."/>
            <person name="Hunicke-Smith S."/>
            <person name="Hyman R.W."/>
            <person name="Johnston M."/>
            <person name="Kalman S."/>
            <person name="Kleine K."/>
            <person name="Komp C."/>
            <person name="Kurdi O."/>
            <person name="Lashkari D."/>
            <person name="Lew H."/>
            <person name="Lin A."/>
            <person name="Lin D."/>
            <person name="Louis E.J."/>
            <person name="Marathe R."/>
            <person name="Messenguy F."/>
            <person name="Mewes H.-W."/>
            <person name="Mirtipati S."/>
            <person name="Moestl D."/>
            <person name="Mueller-Auer S."/>
            <person name="Namath A."/>
            <person name="Nentwich U."/>
            <person name="Oefner P."/>
            <person name="Pearson D."/>
            <person name="Petel F.X."/>
            <person name="Pohl T.M."/>
            <person name="Purnelle B."/>
            <person name="Rajandream M.A."/>
            <person name="Rechmann S."/>
            <person name="Rieger M."/>
            <person name="Riles L."/>
            <person name="Roberts D."/>
            <person name="Schaefer M."/>
            <person name="Scharfe M."/>
            <person name="Scherens B."/>
            <person name="Schramm S."/>
            <person name="Schroeder M."/>
            <person name="Sdicu A.-M."/>
            <person name="Tettelin H."/>
            <person name="Urrestarazu L.A."/>
            <person name="Ushinsky S."/>
            <person name="Vierendeels F."/>
            <person name="Vissers S."/>
            <person name="Voss H."/>
            <person name="Walsh S.V."/>
            <person name="Wambutt R."/>
            <person name="Wang Y."/>
            <person name="Wedler E."/>
            <person name="Wedler H."/>
            <person name="Winnett E."/>
            <person name="Zhong W.-W."/>
            <person name="Zollner A."/>
            <person name="Vo D.H."/>
            <person name="Hani J."/>
        </authorList>
    </citation>
    <scope>NUCLEOTIDE SEQUENCE [LARGE SCALE GENOMIC DNA]</scope>
    <source>
        <strain>ATCC 204508 / S288c</strain>
    </source>
</reference>
<reference key="3">
    <citation type="journal article" date="2014" name="G3 (Bethesda)">
        <title>The reference genome sequence of Saccharomyces cerevisiae: Then and now.</title>
        <authorList>
            <person name="Engel S.R."/>
            <person name="Dietrich F.S."/>
            <person name="Fisk D.G."/>
            <person name="Binkley G."/>
            <person name="Balakrishnan R."/>
            <person name="Costanzo M.C."/>
            <person name="Dwight S.S."/>
            <person name="Hitz B.C."/>
            <person name="Karra K."/>
            <person name="Nash R.S."/>
            <person name="Weng S."/>
            <person name="Wong E.D."/>
            <person name="Lloyd P."/>
            <person name="Skrzypek M.S."/>
            <person name="Miyasato S.R."/>
            <person name="Simison M."/>
            <person name="Cherry J.M."/>
        </authorList>
    </citation>
    <scope>GENOME REANNOTATION</scope>
    <source>
        <strain>ATCC 204508 / S288c</strain>
    </source>
</reference>
<reference key="4">
    <citation type="journal article" date="1997" name="Biochem. Biophys. Res. Commun.">
        <title>Novel membrane protein complexes for protein glycosylation in the yeast Golgi apparatus.</title>
        <authorList>
            <person name="Hashimoto H."/>
            <person name="Yoda K."/>
        </authorList>
    </citation>
    <scope>PROTEIN SEQUENCE OF 2-11</scope>
    <scope>SUBCELLULAR LOCATION</scope>
    <scope>SUBUNIT</scope>
</reference>
<reference key="5">
    <citation type="journal article" date="2000" name="Proc. Natl. Acad. Sci. U.S.A.">
        <title>Active recycling of yeast Golgi mannosyltransferase complexes through the endoplasmic reticulum.</title>
        <authorList>
            <person name="Todorow Z."/>
            <person name="Spang A."/>
            <person name="Carmack E."/>
            <person name="Yates J."/>
            <person name="Schekman R."/>
        </authorList>
    </citation>
    <scope>PROTEIN SEQUENCE OF 143-153</scope>
    <scope>SUBCELLULAR LOCATION</scope>
    <source>
        <strain>RSY455</strain>
    </source>
</reference>
<reference key="6">
    <citation type="journal article" date="1998" name="EMBO J.">
        <title>Multi-protein complexes in the cis Golgi of Saccharomyces cerevisiae with alpha-1,6-mannosyltransferase activity.</title>
        <authorList>
            <person name="Jungmann J."/>
            <person name="Munro S."/>
        </authorList>
    </citation>
    <scope>ACTIVITY OF M-POL COMPLEXES</scope>
    <scope>SUBUNIT</scope>
    <scope>SUBCELLULAR LOCATION</scope>
</reference>
<reference key="7">
    <citation type="journal article" date="2002" name="J. Biol. Chem.">
        <title>The components of the Saccharomyces cerevisiae mannosyltransferase complex M-Pol I have distinct functions in mannan synthesis.</title>
        <authorList>
            <person name="Stolz J."/>
            <person name="Munro S."/>
        </authorList>
    </citation>
    <scope>FUNCTION</scope>
    <scope>COMPOSITION OF THE M-POL I COMPLEX</scope>
    <scope>MUTAGENESIS OF ASP-236</scope>
</reference>
<reference key="8">
    <citation type="journal article" date="2003" name="Nature">
        <title>Global analysis of protein expression in yeast.</title>
        <authorList>
            <person name="Ghaemmaghami S."/>
            <person name="Huh W.-K."/>
            <person name="Bower K."/>
            <person name="Howson R.W."/>
            <person name="Belle A."/>
            <person name="Dephoure N."/>
            <person name="O'Shea E.K."/>
            <person name="Weissman J.S."/>
        </authorList>
    </citation>
    <scope>LEVEL OF PROTEIN EXPRESSION [LARGE SCALE ANALYSIS]</scope>
</reference>
<reference key="9">
    <citation type="journal article" date="2012" name="Proc. Natl. Acad. Sci. U.S.A.">
        <title>N-terminal acetylome analyses and functional insights of the N-terminal acetyltransferase NatB.</title>
        <authorList>
            <person name="Van Damme P."/>
            <person name="Lasa M."/>
            <person name="Polevoda B."/>
            <person name="Gazquez C."/>
            <person name="Elosegui-Artola A."/>
            <person name="Kim D.S."/>
            <person name="De Juan-Pardo E."/>
            <person name="Demeyer K."/>
            <person name="Hole K."/>
            <person name="Larrea E."/>
            <person name="Timmerman E."/>
            <person name="Prieto J."/>
            <person name="Arnesen T."/>
            <person name="Sherman F."/>
            <person name="Gevaert K."/>
            <person name="Aldabe R."/>
        </authorList>
    </citation>
    <scope>IDENTIFICATION BY MASS SPECTROMETRY [LARGE SCALE ANALYSIS]</scope>
</reference>
<dbReference type="EMBL" id="L23752">
    <property type="protein sequence ID" value="AAA53677.1"/>
    <property type="molecule type" value="Genomic_DNA"/>
</dbReference>
<dbReference type="EMBL" id="U44030">
    <property type="protein sequence ID" value="AAB68171.1"/>
    <property type="molecule type" value="Genomic_DNA"/>
</dbReference>
<dbReference type="EMBL" id="BK006949">
    <property type="protein sequence ID" value="DAA11380.1"/>
    <property type="molecule type" value="Genomic_DNA"/>
</dbReference>
<dbReference type="PIR" id="S43746">
    <property type="entry name" value="S43746"/>
</dbReference>
<dbReference type="RefSeq" id="NP_015275.1">
    <property type="nucleotide sequence ID" value="NM_001183864.1"/>
</dbReference>
<dbReference type="PDB" id="3ZF8">
    <property type="method" value="X-ray"/>
    <property type="resolution" value="1.98 A"/>
    <property type="chains" value="A=93-395"/>
</dbReference>
<dbReference type="PDBsum" id="3ZF8"/>
<dbReference type="SMR" id="P39107"/>
<dbReference type="BioGRID" id="36130">
    <property type="interactions" value="70"/>
</dbReference>
<dbReference type="ComplexPortal" id="CPX-1672">
    <property type="entry name" value="alpha-1,6-mannosyltransferase complex, M-Pol I variant"/>
</dbReference>
<dbReference type="ComplexPortal" id="CPX-1839">
    <property type="entry name" value="alpha-1,6-mannosyltransferase complex, M-Pol II variant"/>
</dbReference>
<dbReference type="DIP" id="DIP-783N"/>
<dbReference type="FunCoup" id="P39107">
    <property type="interactions" value="145"/>
</dbReference>
<dbReference type="IntAct" id="P39107">
    <property type="interactions" value="43"/>
</dbReference>
<dbReference type="MINT" id="P39107"/>
<dbReference type="STRING" id="4932.YPL050C"/>
<dbReference type="CAZy" id="GT62">
    <property type="family name" value="Glycosyltransferase Family 62"/>
</dbReference>
<dbReference type="PaxDb" id="4932-YPL050C"/>
<dbReference type="PeptideAtlas" id="P39107"/>
<dbReference type="EnsemblFungi" id="YPL050C_mRNA">
    <property type="protein sequence ID" value="YPL050C"/>
    <property type="gene ID" value="YPL050C"/>
</dbReference>
<dbReference type="GeneID" id="856057"/>
<dbReference type="KEGG" id="sce:YPL050C"/>
<dbReference type="AGR" id="SGD:S000005971"/>
<dbReference type="SGD" id="S000005971">
    <property type="gene designation" value="MNN9"/>
</dbReference>
<dbReference type="VEuPathDB" id="FungiDB:YPL050C"/>
<dbReference type="eggNOG" id="ENOG502QRPX">
    <property type="taxonomic scope" value="Eukaryota"/>
</dbReference>
<dbReference type="GeneTree" id="ENSGT00940000176370"/>
<dbReference type="HOGENOM" id="CLU_017872_4_0_1"/>
<dbReference type="InParanoid" id="P39107"/>
<dbReference type="OMA" id="IPKTREG"/>
<dbReference type="OrthoDB" id="2405412at2759"/>
<dbReference type="BioCyc" id="MetaCyc:G3O-33963-MONOMER"/>
<dbReference type="BioCyc" id="YEAST:G3O-33963-MONOMER"/>
<dbReference type="BRENDA" id="2.4.1.232">
    <property type="organism ID" value="984"/>
</dbReference>
<dbReference type="UniPathway" id="UPA00378"/>
<dbReference type="BioGRID-ORCS" id="856057">
    <property type="hits" value="0 hits in 10 CRISPR screens"/>
</dbReference>
<dbReference type="EvolutionaryTrace" id="P39107"/>
<dbReference type="PRO" id="PR:P39107"/>
<dbReference type="Proteomes" id="UP000002311">
    <property type="component" value="Chromosome XVI"/>
</dbReference>
<dbReference type="RNAct" id="P39107">
    <property type="molecule type" value="protein"/>
</dbReference>
<dbReference type="GO" id="GO:0005801">
    <property type="term" value="C:cis-Golgi network"/>
    <property type="evidence" value="ECO:0000314"/>
    <property type="project" value="SGD"/>
</dbReference>
<dbReference type="GO" id="GO:0005783">
    <property type="term" value="C:endoplasmic reticulum"/>
    <property type="evidence" value="ECO:0007005"/>
    <property type="project" value="SGD"/>
</dbReference>
<dbReference type="GO" id="GO:0005789">
    <property type="term" value="C:endoplasmic reticulum membrane"/>
    <property type="evidence" value="ECO:0007669"/>
    <property type="project" value="UniProtKB-SubCell"/>
</dbReference>
<dbReference type="GO" id="GO:0000137">
    <property type="term" value="C:Golgi cis cisterna"/>
    <property type="evidence" value="ECO:0000314"/>
    <property type="project" value="UniProtKB"/>
</dbReference>
<dbReference type="GO" id="GO:0000136">
    <property type="term" value="C:mannan polymerase complex"/>
    <property type="evidence" value="ECO:0000314"/>
    <property type="project" value="SGD"/>
</dbReference>
<dbReference type="GO" id="GO:0000032">
    <property type="term" value="P:cell wall mannoprotein biosynthetic process"/>
    <property type="evidence" value="ECO:0000318"/>
    <property type="project" value="GO_Central"/>
</dbReference>
<dbReference type="GO" id="GO:0006487">
    <property type="term" value="P:protein N-linked glycosylation"/>
    <property type="evidence" value="ECO:0000314"/>
    <property type="project" value="SGD"/>
</dbReference>
<dbReference type="FunFam" id="3.90.550.10:FF:000017">
    <property type="entry name" value="Mannan polymerase II complex ANP1 subunit"/>
    <property type="match status" value="1"/>
</dbReference>
<dbReference type="Gene3D" id="3.90.550.10">
    <property type="entry name" value="Spore Coat Polysaccharide Biosynthesis Protein SpsA, Chain A"/>
    <property type="match status" value="1"/>
</dbReference>
<dbReference type="InterPro" id="IPR052086">
    <property type="entry name" value="Mannan_Polymerase_Subunit"/>
</dbReference>
<dbReference type="InterPro" id="IPR029044">
    <property type="entry name" value="Nucleotide-diphossugar_trans"/>
</dbReference>
<dbReference type="PANTHER" id="PTHR43083:SF6">
    <property type="entry name" value="MANNAN POLYMERASE COMPLEXES SUBUNIT MNN9"/>
    <property type="match status" value="1"/>
</dbReference>
<dbReference type="PANTHER" id="PTHR43083">
    <property type="entry name" value="MANNAN POLYMERASE II"/>
    <property type="match status" value="1"/>
</dbReference>
<dbReference type="Pfam" id="PF03452">
    <property type="entry name" value="Anp1"/>
    <property type="match status" value="1"/>
</dbReference>
<dbReference type="SUPFAM" id="SSF53448">
    <property type="entry name" value="Nucleotide-diphospho-sugar transferases"/>
    <property type="match status" value="1"/>
</dbReference>
<evidence type="ECO:0000255" key="1"/>
<evidence type="ECO:0000269" key="2">
    <source>
    </source>
</evidence>
<evidence type="ECO:0000269" key="3">
    <source>
    </source>
</evidence>
<evidence type="ECO:0000269" key="4">
    <source>
    </source>
</evidence>
<evidence type="ECO:0000269" key="5">
    <source>
    </source>
</evidence>
<evidence type="ECO:0000269" key="6">
    <source>
    </source>
</evidence>
<evidence type="ECO:0000305" key="7"/>
<evidence type="ECO:0000305" key="8">
    <source>
    </source>
</evidence>
<evidence type="ECO:0007829" key="9">
    <source>
        <dbReference type="PDB" id="3ZF8"/>
    </source>
</evidence>
<protein>
    <recommendedName>
        <fullName>Mannan polymerase complexes subunit MNN9</fullName>
        <shortName>M-pol I subunit MNN9</shortName>
    </recommendedName>
    <alternativeName>
        <fullName>M-Pol II subunit MNN9</fullName>
    </alternativeName>
</protein>
<organism>
    <name type="scientific">Saccharomyces cerevisiae (strain ATCC 204508 / S288c)</name>
    <name type="common">Baker's yeast</name>
    <dbReference type="NCBI Taxonomy" id="559292"/>
    <lineage>
        <taxon>Eukaryota</taxon>
        <taxon>Fungi</taxon>
        <taxon>Dikarya</taxon>
        <taxon>Ascomycota</taxon>
        <taxon>Saccharomycotina</taxon>
        <taxon>Saccharomycetes</taxon>
        <taxon>Saccharomycetales</taxon>
        <taxon>Saccharomycetaceae</taxon>
        <taxon>Saccharomyces</taxon>
    </lineage>
</organism>
<keyword id="KW-0002">3D-structure</keyword>
<keyword id="KW-0903">Direct protein sequencing</keyword>
<keyword id="KW-0256">Endoplasmic reticulum</keyword>
<keyword id="KW-0333">Golgi apparatus</keyword>
<keyword id="KW-0472">Membrane</keyword>
<keyword id="KW-1185">Reference proteome</keyword>
<keyword id="KW-0735">Signal-anchor</keyword>
<keyword id="KW-0812">Transmembrane</keyword>
<keyword id="KW-1133">Transmembrane helix</keyword>
<gene>
    <name type="primary">MNN9</name>
    <name type="ordered locus">YPL050C</name>
    <name type="ORF">P7102.01</name>
</gene>
<accession>P39107</accession>
<accession>D6W3W4</accession>
<name>MNN9_YEAST</name>
<proteinExistence type="evidence at protein level"/>
<sequence length="395" mass="45955">MSLSLVSYRLRKNPWVNIFLPVLAIFLIYIIFFQRDQSLLGLNGQSISQHKWAHEKENTFYFPFTKKYKMPKYSYKKKSGWLFNDHVEDIIPEGHIAHYDLNKLHSTSEAAVNKEHILILTPMQTFHQQYWDNLLQLNYPRELIELGFITPRTATGDLALKKLENAIKKVQTDKKTQRFSKITILRQNSQSFDKLMEKERHALDVQKERRAAMALARNELLFSTIGPHTSWVLWLDADIIETPPSLIQDMTKHNKAILAANIYQRFYDEEKKQPSIRPYDFNNWQESDTGLEIASQMGDDEIIVEGYAEIATYRPLMAHFYDANGVPGEEMALDGVGGGCTLVKAEVHRDGAMFPNFPFYHLIETEGFAKMAKRLNYDVFGLPNYLVYHIEEENH</sequence>
<comment type="function">
    <text evidence="3">The M-Pol I and M-Pol II complexes possess alpha-1,6-mannosyltransferase activity and are probably involved in the elongation of the mannan backbone of N-linked glycans on cell wall and periplasmic proteins. May also provide alpha-1,2-mannosyltransferase activity to the M-Pol I complex.</text>
</comment>
<comment type="pathway">
    <text>Protein modification; protein glycosylation.</text>
</comment>
<comment type="subunit">
    <text evidence="5 6">The M-Pol I complex contains MNN9 and VAN1. The M-Pol II complex is composed of ANP1, MNN9, MNN10, MNN11 and HOC1.</text>
</comment>
<comment type="interaction">
    <interactant intactId="EBI-11082">
        <id>P39107</id>
    </interactant>
    <interactant intactId="EBI-2595">
        <id>P32629</id>
        <label>ANP1</label>
    </interactant>
    <organismsDiffer>false</organismsDiffer>
    <experiments>7</experiments>
</comment>
<comment type="interaction">
    <interactant intactId="EBI-11082">
        <id>P39107</id>
    </interactant>
    <interactant intactId="EBI-20237">
        <id>P23642</id>
        <label>VAN1</label>
    </interactant>
    <organismsDiffer>false</organismsDiffer>
    <experiments>5</experiments>
</comment>
<comment type="subcellular location">
    <subcellularLocation>
        <location evidence="2">Endoplasmic reticulum membrane</location>
        <topology evidence="8">Single-pass type II membrane protein</topology>
    </subcellularLocation>
    <subcellularLocation>
        <location evidence="6">Golgi apparatus membrane</location>
        <topology evidence="8">Single-pass type II membrane protein</topology>
    </subcellularLocation>
    <text evidence="2 5">Cis-Golgi (PubMed:9430634). Recycles between endoplasmic reticulum and Golgi (PubMed:11095735).</text>
</comment>
<comment type="miscellaneous">
    <text evidence="4">Present with 1630 molecules/cell in log phase SD medium.</text>
</comment>
<comment type="similarity">
    <text evidence="7">Belongs to the ANP1/MMN9/VAN1 family.</text>
</comment>
<feature type="initiator methionine" description="Removed" evidence="6">
    <location>
        <position position="1"/>
    </location>
</feature>
<feature type="chain" id="PRO_0000193670" description="Mannan polymerase complexes subunit MNN9">
    <location>
        <begin position="2"/>
        <end position="395"/>
    </location>
</feature>
<feature type="topological domain" description="Cytoplasmic" evidence="1">
    <location>
        <begin position="2"/>
        <end position="17"/>
    </location>
</feature>
<feature type="transmembrane region" description="Helical; Signal-anchor for type II membrane protein" evidence="1">
    <location>
        <begin position="18"/>
        <end position="33"/>
    </location>
</feature>
<feature type="topological domain" description="Lumenal" evidence="1">
    <location>
        <begin position="34"/>
        <end position="395"/>
    </location>
</feature>
<feature type="mutagenesis site" description="Reduced activity of the M-Pol I complex." evidence="3">
    <original>D</original>
    <variation>A</variation>
    <location>
        <position position="236"/>
    </location>
</feature>
<feature type="helix" evidence="9">
    <location>
        <begin position="101"/>
        <end position="103"/>
    </location>
</feature>
<feature type="turn" evidence="9">
    <location>
        <begin position="108"/>
        <end position="114"/>
    </location>
</feature>
<feature type="strand" evidence="9">
    <location>
        <begin position="116"/>
        <end position="122"/>
    </location>
</feature>
<feature type="helix" evidence="9">
    <location>
        <begin position="128"/>
        <end position="135"/>
    </location>
</feature>
<feature type="helix" evidence="9">
    <location>
        <begin position="141"/>
        <end position="143"/>
    </location>
</feature>
<feature type="strand" evidence="9">
    <location>
        <begin position="144"/>
        <end position="150"/>
    </location>
</feature>
<feature type="helix" evidence="9">
    <location>
        <begin position="154"/>
        <end position="171"/>
    </location>
</feature>
<feature type="helix" evidence="9">
    <location>
        <begin position="175"/>
        <end position="177"/>
    </location>
</feature>
<feature type="strand" evidence="9">
    <location>
        <begin position="180"/>
        <end position="186"/>
    </location>
</feature>
<feature type="helix" evidence="9">
    <location>
        <begin position="204"/>
        <end position="224"/>
    </location>
</feature>
<feature type="strand" evidence="9">
    <location>
        <begin position="229"/>
        <end position="235"/>
    </location>
</feature>
<feature type="strand" evidence="9">
    <location>
        <begin position="239"/>
        <end position="241"/>
    </location>
</feature>
<feature type="helix" evidence="9">
    <location>
        <begin position="246"/>
        <end position="251"/>
    </location>
</feature>
<feature type="strand" evidence="9">
    <location>
        <begin position="256"/>
        <end position="268"/>
    </location>
</feature>
<feature type="turn" evidence="9">
    <location>
        <begin position="269"/>
        <end position="272"/>
    </location>
</feature>
<feature type="strand" evidence="9">
    <location>
        <begin position="273"/>
        <end position="278"/>
    </location>
</feature>
<feature type="helix" evidence="9">
    <location>
        <begin position="288"/>
        <end position="295"/>
    </location>
</feature>
<feature type="turn" evidence="9">
    <location>
        <begin position="308"/>
        <end position="312"/>
    </location>
</feature>
<feature type="helix" evidence="9">
    <location>
        <begin position="317"/>
        <end position="320"/>
    </location>
</feature>
<feature type="strand" evidence="9">
    <location>
        <begin position="331"/>
        <end position="335"/>
    </location>
</feature>
<feature type="strand" evidence="9">
    <location>
        <begin position="338"/>
        <end position="344"/>
    </location>
</feature>
<feature type="helix" evidence="9">
    <location>
        <begin position="345"/>
        <end position="349"/>
    </location>
</feature>
<feature type="helix" evidence="9">
    <location>
        <begin position="364"/>
        <end position="374"/>
    </location>
</feature>
<feature type="strand" evidence="9">
    <location>
        <begin position="379"/>
        <end position="389"/>
    </location>
</feature>